<evidence type="ECO:0000250" key="1"/>
<evidence type="ECO:0000255" key="2">
    <source>
        <dbReference type="HAMAP-Rule" id="MF_00403"/>
    </source>
</evidence>
<evidence type="ECO:0000305" key="3"/>
<keyword id="KW-0150">Chloroplast</keyword>
<keyword id="KW-0934">Plastid</keyword>
<keyword id="KW-0687">Ribonucleoprotein</keyword>
<keyword id="KW-0689">Ribosomal protein</keyword>
<keyword id="KW-0694">RNA-binding</keyword>
<keyword id="KW-0699">rRNA-binding</keyword>
<name>RR12_PLAOC</name>
<reference key="1">
    <citation type="journal article" date="2006" name="BMC Plant Biol.">
        <title>Rapid and accurate pyrosequencing of angiosperm plastid genomes.</title>
        <authorList>
            <person name="Moore M.J."/>
            <person name="Dhingra A."/>
            <person name="Soltis P.S."/>
            <person name="Shaw R."/>
            <person name="Farmerie W.G."/>
            <person name="Folta K.M."/>
            <person name="Soltis D.E."/>
        </authorList>
    </citation>
    <scope>NUCLEOTIDE SEQUENCE [LARGE SCALE GENOMIC DNA]</scope>
</reference>
<geneLocation type="chloroplast"/>
<organism>
    <name type="scientific">Platanus occidentalis</name>
    <name type="common">Sycamore</name>
    <name type="synonym">American plane tree</name>
    <dbReference type="NCBI Taxonomy" id="4403"/>
    <lineage>
        <taxon>Eukaryota</taxon>
        <taxon>Viridiplantae</taxon>
        <taxon>Streptophyta</taxon>
        <taxon>Embryophyta</taxon>
        <taxon>Tracheophyta</taxon>
        <taxon>Spermatophyta</taxon>
        <taxon>Magnoliopsida</taxon>
        <taxon>Proteales</taxon>
        <taxon>Platanaceae</taxon>
        <taxon>Platanus</taxon>
    </lineage>
</organism>
<feature type="chain" id="PRO_0000296077" description="Small ribosomal subunit protein uS12cz/uS12cy">
    <location>
        <begin position="1"/>
        <end position="123"/>
    </location>
</feature>
<protein>
    <recommendedName>
        <fullName evidence="2">Small ribosomal subunit protein uS12cz/uS12cy</fullName>
    </recommendedName>
    <alternativeName>
        <fullName evidence="3">30S ribosomal protein S12, chloroplastic</fullName>
    </alternativeName>
</protein>
<dbReference type="EMBL" id="DQ923116">
    <property type="protein sequence ID" value="ABI49802.1"/>
    <property type="molecule type" value="Genomic_DNA"/>
</dbReference>
<dbReference type="EMBL" id="DQ923116">
    <property type="protein sequence ID" value="ABI49803.1"/>
    <property type="molecule type" value="Genomic_DNA"/>
</dbReference>
<dbReference type="SMR" id="Q09G22"/>
<dbReference type="GO" id="GO:0009507">
    <property type="term" value="C:chloroplast"/>
    <property type="evidence" value="ECO:0007669"/>
    <property type="project" value="UniProtKB-SubCell"/>
</dbReference>
<dbReference type="GO" id="GO:0015935">
    <property type="term" value="C:small ribosomal subunit"/>
    <property type="evidence" value="ECO:0007669"/>
    <property type="project" value="InterPro"/>
</dbReference>
<dbReference type="GO" id="GO:0019843">
    <property type="term" value="F:rRNA binding"/>
    <property type="evidence" value="ECO:0007669"/>
    <property type="project" value="UniProtKB-UniRule"/>
</dbReference>
<dbReference type="GO" id="GO:0003735">
    <property type="term" value="F:structural constituent of ribosome"/>
    <property type="evidence" value="ECO:0007669"/>
    <property type="project" value="InterPro"/>
</dbReference>
<dbReference type="GO" id="GO:0006412">
    <property type="term" value="P:translation"/>
    <property type="evidence" value="ECO:0007669"/>
    <property type="project" value="UniProtKB-UniRule"/>
</dbReference>
<dbReference type="CDD" id="cd03368">
    <property type="entry name" value="Ribosomal_S12"/>
    <property type="match status" value="1"/>
</dbReference>
<dbReference type="FunFam" id="2.40.50.140:FF:000008">
    <property type="entry name" value="30S ribosomal protein S12, chloroplastic"/>
    <property type="match status" value="1"/>
</dbReference>
<dbReference type="Gene3D" id="2.40.50.140">
    <property type="entry name" value="Nucleic acid-binding proteins"/>
    <property type="match status" value="1"/>
</dbReference>
<dbReference type="HAMAP" id="MF_00403_B">
    <property type="entry name" value="Ribosomal_uS12_B"/>
    <property type="match status" value="1"/>
</dbReference>
<dbReference type="InterPro" id="IPR012340">
    <property type="entry name" value="NA-bd_OB-fold"/>
</dbReference>
<dbReference type="InterPro" id="IPR006032">
    <property type="entry name" value="Ribosomal_uS12"/>
</dbReference>
<dbReference type="InterPro" id="IPR005679">
    <property type="entry name" value="Ribosomal_uS12_bac"/>
</dbReference>
<dbReference type="NCBIfam" id="TIGR00981">
    <property type="entry name" value="rpsL_bact"/>
    <property type="match status" value="1"/>
</dbReference>
<dbReference type="PANTHER" id="PTHR11652">
    <property type="entry name" value="30S RIBOSOMAL PROTEIN S12 FAMILY MEMBER"/>
    <property type="match status" value="1"/>
</dbReference>
<dbReference type="Pfam" id="PF00164">
    <property type="entry name" value="Ribosom_S12_S23"/>
    <property type="match status" value="1"/>
</dbReference>
<dbReference type="PIRSF" id="PIRSF002133">
    <property type="entry name" value="Ribosomal_S12/S23"/>
    <property type="match status" value="1"/>
</dbReference>
<dbReference type="PRINTS" id="PR01034">
    <property type="entry name" value="RIBOSOMALS12"/>
</dbReference>
<dbReference type="SUPFAM" id="SSF50249">
    <property type="entry name" value="Nucleic acid-binding proteins"/>
    <property type="match status" value="1"/>
</dbReference>
<dbReference type="PROSITE" id="PS00055">
    <property type="entry name" value="RIBOSOMAL_S12"/>
    <property type="match status" value="1"/>
</dbReference>
<proteinExistence type="inferred from homology"/>
<accession>Q09G22</accession>
<gene>
    <name type="primary">rps12-A</name>
</gene>
<gene>
    <name type="primary">rps12-B</name>
</gene>
<comment type="function">
    <text evidence="1">With S4 and S5 plays an important role in translational accuracy. Located at the interface of the 30S and 50S subunits (By similarity).</text>
</comment>
<comment type="subunit">
    <text evidence="1">Part of the 30S ribosomal subunit.</text>
</comment>
<comment type="subcellular location">
    <subcellularLocation>
        <location>Plastid</location>
        <location>Chloroplast</location>
    </subcellularLocation>
</comment>
<comment type="similarity">
    <text evidence="3">Belongs to the universal ribosomal protein uS12 family.</text>
</comment>
<sequence length="123" mass="13750">MPTIKQLIRNTRQPVRNVTKSPALRGCPQRRGTCTRVYTITPKKPNSALRKVARVRLTSGFEITAYIPGIGHNLQEHSVVLVRGGRVKDLPGVRYHIVRGTLDAVGVKDRQQGRSKYGVKKPK</sequence>